<comment type="function">
    <text evidence="1">Catalyzes the reversible cyclization of carbamoyl aspartate to dihydroorotate.</text>
</comment>
<comment type="catalytic activity">
    <reaction evidence="1">
        <text>(S)-dihydroorotate + H2O = N-carbamoyl-L-aspartate + H(+)</text>
        <dbReference type="Rhea" id="RHEA:24296"/>
        <dbReference type="ChEBI" id="CHEBI:15377"/>
        <dbReference type="ChEBI" id="CHEBI:15378"/>
        <dbReference type="ChEBI" id="CHEBI:30864"/>
        <dbReference type="ChEBI" id="CHEBI:32814"/>
        <dbReference type="EC" id="3.5.2.3"/>
    </reaction>
</comment>
<comment type="cofactor">
    <cofactor evidence="1">
        <name>Zn(2+)</name>
        <dbReference type="ChEBI" id="CHEBI:29105"/>
    </cofactor>
    <text evidence="1">Binds 2 Zn(2+) ions per subunit.</text>
</comment>
<comment type="pathway">
    <text evidence="1">Pyrimidine metabolism; UMP biosynthesis via de novo pathway; (S)-dihydroorotate from bicarbonate: step 3/3.</text>
</comment>
<comment type="subunit">
    <text evidence="1">Homodimer.</text>
</comment>
<comment type="similarity">
    <text evidence="1">Belongs to the metallo-dependent hydrolases superfamily. DHOase family. Class II DHOase subfamily.</text>
</comment>
<reference key="1">
    <citation type="submission" date="1998-11" db="EMBL/GenBank/DDBJ databases">
        <authorList>
            <person name="Brichta D.M."/>
            <person name="Brown T.M."/>
            <person name="Houghton J.E."/>
            <person name="O'Donovan G.A."/>
        </authorList>
    </citation>
    <scope>NUCLEOTIDE SEQUENCE [GENOMIC DNA]</scope>
    <source>
        <strain>ATCC 15692 / DSM 22644 / CIP 104116 / JCM 14847 / LMG 12228 / 1C / PRS 101 / PAO1</strain>
    </source>
</reference>
<reference key="2">
    <citation type="journal article" date="2000" name="Nature">
        <title>Complete genome sequence of Pseudomonas aeruginosa PAO1, an opportunistic pathogen.</title>
        <authorList>
            <person name="Stover C.K."/>
            <person name="Pham X.-Q.T."/>
            <person name="Erwin A.L."/>
            <person name="Mizoguchi S.D."/>
            <person name="Warrener P."/>
            <person name="Hickey M.J."/>
            <person name="Brinkman F.S.L."/>
            <person name="Hufnagle W.O."/>
            <person name="Kowalik D.J."/>
            <person name="Lagrou M."/>
            <person name="Garber R.L."/>
            <person name="Goltry L."/>
            <person name="Tolentino E."/>
            <person name="Westbrock-Wadman S."/>
            <person name="Yuan Y."/>
            <person name="Brody L.L."/>
            <person name="Coulter S.N."/>
            <person name="Folger K.R."/>
            <person name="Kas A."/>
            <person name="Larbig K."/>
            <person name="Lim R.M."/>
            <person name="Smith K.A."/>
            <person name="Spencer D.H."/>
            <person name="Wong G.K.-S."/>
            <person name="Wu Z."/>
            <person name="Paulsen I.T."/>
            <person name="Reizer J."/>
            <person name="Saier M.H. Jr."/>
            <person name="Hancock R.E.W."/>
            <person name="Lory S."/>
            <person name="Olson M.V."/>
        </authorList>
    </citation>
    <scope>NUCLEOTIDE SEQUENCE [LARGE SCALE GENOMIC DNA]</scope>
    <source>
        <strain>ATCC 15692 / DSM 22644 / CIP 104116 / JCM 14847 / LMG 12228 / 1C / PRS 101 / PAO1</strain>
    </source>
</reference>
<feature type="chain" id="PRO_0000147212" description="Dihydroorotase">
    <location>
        <begin position="1"/>
        <end position="348"/>
    </location>
</feature>
<feature type="active site" evidence="1">
    <location>
        <position position="248"/>
    </location>
</feature>
<feature type="binding site" evidence="1">
    <location>
        <position position="14"/>
    </location>
    <ligand>
        <name>Zn(2+)</name>
        <dbReference type="ChEBI" id="CHEBI:29105"/>
        <label>1</label>
    </ligand>
</feature>
<feature type="binding site" evidence="1">
    <location>
        <begin position="16"/>
        <end position="18"/>
    </location>
    <ligand>
        <name>substrate</name>
    </ligand>
</feature>
<feature type="binding site" evidence="1">
    <location>
        <position position="16"/>
    </location>
    <ligand>
        <name>Zn(2+)</name>
        <dbReference type="ChEBI" id="CHEBI:29105"/>
        <label>1</label>
    </ligand>
</feature>
<feature type="binding site" evidence="1">
    <location>
        <position position="42"/>
    </location>
    <ligand>
        <name>substrate</name>
    </ligand>
</feature>
<feature type="binding site" description="via carbamate group" evidence="1">
    <location>
        <position position="100"/>
    </location>
    <ligand>
        <name>Zn(2+)</name>
        <dbReference type="ChEBI" id="CHEBI:29105"/>
        <label>1</label>
    </ligand>
</feature>
<feature type="binding site" description="via carbamate group" evidence="1">
    <location>
        <position position="100"/>
    </location>
    <ligand>
        <name>Zn(2+)</name>
        <dbReference type="ChEBI" id="CHEBI:29105"/>
        <label>2</label>
    </ligand>
</feature>
<feature type="binding site" evidence="1">
    <location>
        <position position="137"/>
    </location>
    <ligand>
        <name>substrate</name>
    </ligand>
</feature>
<feature type="binding site" evidence="1">
    <location>
        <position position="137"/>
    </location>
    <ligand>
        <name>Zn(2+)</name>
        <dbReference type="ChEBI" id="CHEBI:29105"/>
        <label>2</label>
    </ligand>
</feature>
<feature type="binding site" evidence="1">
    <location>
        <position position="175"/>
    </location>
    <ligand>
        <name>Zn(2+)</name>
        <dbReference type="ChEBI" id="CHEBI:29105"/>
        <label>2</label>
    </ligand>
</feature>
<feature type="binding site" evidence="1">
    <location>
        <position position="220"/>
    </location>
    <ligand>
        <name>substrate</name>
    </ligand>
</feature>
<feature type="binding site" evidence="1">
    <location>
        <position position="248"/>
    </location>
    <ligand>
        <name>Zn(2+)</name>
        <dbReference type="ChEBI" id="CHEBI:29105"/>
        <label>1</label>
    </ligand>
</feature>
<feature type="binding site" evidence="1">
    <location>
        <position position="252"/>
    </location>
    <ligand>
        <name>substrate</name>
    </ligand>
</feature>
<feature type="binding site" evidence="1">
    <location>
        <position position="264"/>
    </location>
    <ligand>
        <name>substrate</name>
    </ligand>
</feature>
<feature type="modified residue" description="N6-carboxylysine" evidence="1">
    <location>
        <position position="100"/>
    </location>
</feature>
<gene>
    <name evidence="1" type="primary">pyrC</name>
    <name type="ordered locus">PA3527</name>
</gene>
<evidence type="ECO:0000255" key="1">
    <source>
        <dbReference type="HAMAP-Rule" id="MF_00219"/>
    </source>
</evidence>
<proteinExistence type="inferred from homology"/>
<accession>P72170</accession>
<sequence length="348" mass="38407">MSDRLTLLRPDDWHIHLRDGAALANTVGDAARTFGRAIVMPNLVPPVRNAAEADAYRQRILAARPAASRFEPLMVLYLTDRTSTEEIRTAKASGFVHAAKLYPAGATTNSDSGVTRIDNIFEALEAMAEVGMPLLVHGEVTRAEVDVFDREKQFIDEHLRRVVERFPTLKVVFEHITTGDAAQFVREAPANVGATITAHHLLYNRNHMLVGGIRPHFYCLPILKRNTHQEALLDAAVSGNPKFFLGTDSAPHARHAKEAACGCAGCYSAYAAIELYAEAFEQRNALDKLEGFASLHGPDFYGLPRNTDRITLVREEWQAPASLPFGDFDVVPLRAGETLRWKLLEAGA</sequence>
<protein>
    <recommendedName>
        <fullName evidence="1">Dihydroorotase</fullName>
        <shortName evidence="1">DHOase</shortName>
        <ecNumber evidence="1">3.5.2.3</ecNumber>
    </recommendedName>
</protein>
<organism>
    <name type="scientific">Pseudomonas aeruginosa (strain ATCC 15692 / DSM 22644 / CIP 104116 / JCM 14847 / LMG 12228 / 1C / PRS 101 / PAO1)</name>
    <dbReference type="NCBI Taxonomy" id="208964"/>
    <lineage>
        <taxon>Bacteria</taxon>
        <taxon>Pseudomonadati</taxon>
        <taxon>Pseudomonadota</taxon>
        <taxon>Gammaproteobacteria</taxon>
        <taxon>Pseudomonadales</taxon>
        <taxon>Pseudomonadaceae</taxon>
        <taxon>Pseudomonas</taxon>
    </lineage>
</organism>
<keyword id="KW-0378">Hydrolase</keyword>
<keyword id="KW-0479">Metal-binding</keyword>
<keyword id="KW-0665">Pyrimidine biosynthesis</keyword>
<keyword id="KW-1185">Reference proteome</keyword>
<keyword id="KW-0862">Zinc</keyword>
<name>PYRC_PSEAE</name>
<dbReference type="EC" id="3.5.2.3" evidence="1"/>
<dbReference type="EMBL" id="U73505">
    <property type="protein sequence ID" value="AAC73109.1"/>
    <property type="molecule type" value="Genomic_DNA"/>
</dbReference>
<dbReference type="EMBL" id="AE004091">
    <property type="protein sequence ID" value="AAG06915.1"/>
    <property type="molecule type" value="Genomic_DNA"/>
</dbReference>
<dbReference type="PIR" id="T10453">
    <property type="entry name" value="T10453"/>
</dbReference>
<dbReference type="RefSeq" id="NP_252217.1">
    <property type="nucleotide sequence ID" value="NC_002516.2"/>
</dbReference>
<dbReference type="RefSeq" id="WP_003112889.1">
    <property type="nucleotide sequence ID" value="NC_002516.2"/>
</dbReference>
<dbReference type="SMR" id="P72170"/>
<dbReference type="FunCoup" id="P72170">
    <property type="interactions" value="581"/>
</dbReference>
<dbReference type="STRING" id="208964.PA3527"/>
<dbReference type="MEROPS" id="M38.A02"/>
<dbReference type="PaxDb" id="208964-PA3527"/>
<dbReference type="GeneID" id="879809"/>
<dbReference type="KEGG" id="pae:PA3527"/>
<dbReference type="PATRIC" id="fig|208964.12.peg.3691"/>
<dbReference type="PseudoCAP" id="PA3527"/>
<dbReference type="HOGENOM" id="CLU_041558_1_0_6"/>
<dbReference type="InParanoid" id="P72170"/>
<dbReference type="OrthoDB" id="9808095at2"/>
<dbReference type="PhylomeDB" id="P72170"/>
<dbReference type="BioCyc" id="PAER208964:G1FZ6-3595-MONOMER"/>
<dbReference type="BRENDA" id="3.5.2.3">
    <property type="organism ID" value="5087"/>
</dbReference>
<dbReference type="UniPathway" id="UPA00070">
    <property type="reaction ID" value="UER00117"/>
</dbReference>
<dbReference type="Proteomes" id="UP000002438">
    <property type="component" value="Chromosome"/>
</dbReference>
<dbReference type="GO" id="GO:0005737">
    <property type="term" value="C:cytoplasm"/>
    <property type="evidence" value="ECO:0000318"/>
    <property type="project" value="GO_Central"/>
</dbReference>
<dbReference type="GO" id="GO:0005829">
    <property type="term" value="C:cytosol"/>
    <property type="evidence" value="ECO:0000318"/>
    <property type="project" value="GO_Central"/>
</dbReference>
<dbReference type="GO" id="GO:0004151">
    <property type="term" value="F:dihydroorotase activity"/>
    <property type="evidence" value="ECO:0000318"/>
    <property type="project" value="GO_Central"/>
</dbReference>
<dbReference type="GO" id="GO:0008270">
    <property type="term" value="F:zinc ion binding"/>
    <property type="evidence" value="ECO:0007669"/>
    <property type="project" value="UniProtKB-UniRule"/>
</dbReference>
<dbReference type="GO" id="GO:0006207">
    <property type="term" value="P:'de novo' pyrimidine nucleobase biosynthetic process"/>
    <property type="evidence" value="ECO:0000318"/>
    <property type="project" value="GO_Central"/>
</dbReference>
<dbReference type="GO" id="GO:0044205">
    <property type="term" value="P:'de novo' UMP biosynthetic process"/>
    <property type="evidence" value="ECO:0007669"/>
    <property type="project" value="UniProtKB-UniRule"/>
</dbReference>
<dbReference type="GO" id="GO:0006221">
    <property type="term" value="P:pyrimidine nucleotide biosynthetic process"/>
    <property type="evidence" value="ECO:0000318"/>
    <property type="project" value="GO_Central"/>
</dbReference>
<dbReference type="CDD" id="cd01294">
    <property type="entry name" value="DHOase"/>
    <property type="match status" value="1"/>
</dbReference>
<dbReference type="FunFam" id="3.20.20.140:FF:000006">
    <property type="entry name" value="Dihydroorotase"/>
    <property type="match status" value="1"/>
</dbReference>
<dbReference type="Gene3D" id="3.20.20.140">
    <property type="entry name" value="Metal-dependent hydrolases"/>
    <property type="match status" value="1"/>
</dbReference>
<dbReference type="HAMAP" id="MF_00219">
    <property type="entry name" value="PyrC_classII"/>
    <property type="match status" value="1"/>
</dbReference>
<dbReference type="InterPro" id="IPR006680">
    <property type="entry name" value="Amidohydro-rel"/>
</dbReference>
<dbReference type="InterPro" id="IPR004721">
    <property type="entry name" value="DHOdimr"/>
</dbReference>
<dbReference type="InterPro" id="IPR002195">
    <property type="entry name" value="Dihydroorotase_CS"/>
</dbReference>
<dbReference type="InterPro" id="IPR032466">
    <property type="entry name" value="Metal_Hydrolase"/>
</dbReference>
<dbReference type="NCBIfam" id="TIGR00856">
    <property type="entry name" value="pyrC_dimer"/>
    <property type="match status" value="1"/>
</dbReference>
<dbReference type="PANTHER" id="PTHR43137">
    <property type="entry name" value="DIHYDROOROTASE"/>
    <property type="match status" value="1"/>
</dbReference>
<dbReference type="PANTHER" id="PTHR43137:SF1">
    <property type="entry name" value="DIHYDROOROTASE"/>
    <property type="match status" value="1"/>
</dbReference>
<dbReference type="Pfam" id="PF01979">
    <property type="entry name" value="Amidohydro_1"/>
    <property type="match status" value="1"/>
</dbReference>
<dbReference type="PIRSF" id="PIRSF001237">
    <property type="entry name" value="DHOdimr"/>
    <property type="match status" value="1"/>
</dbReference>
<dbReference type="SUPFAM" id="SSF51556">
    <property type="entry name" value="Metallo-dependent hydrolases"/>
    <property type="match status" value="1"/>
</dbReference>
<dbReference type="PROSITE" id="PS00482">
    <property type="entry name" value="DIHYDROOROTASE_1"/>
    <property type="match status" value="1"/>
</dbReference>
<dbReference type="PROSITE" id="PS00483">
    <property type="entry name" value="DIHYDROOROTASE_2"/>
    <property type="match status" value="1"/>
</dbReference>